<reference key="1">
    <citation type="journal article" date="2001" name="Nature">
        <title>Genome sequence of enterohaemorrhagic Escherichia coli O157:H7.</title>
        <authorList>
            <person name="Perna N.T."/>
            <person name="Plunkett G. III"/>
            <person name="Burland V."/>
            <person name="Mau B."/>
            <person name="Glasner J.D."/>
            <person name="Rose D.J."/>
            <person name="Mayhew G.F."/>
            <person name="Evans P.S."/>
            <person name="Gregor J."/>
            <person name="Kirkpatrick H.A."/>
            <person name="Posfai G."/>
            <person name="Hackett J."/>
            <person name="Klink S."/>
            <person name="Boutin A."/>
            <person name="Shao Y."/>
            <person name="Miller L."/>
            <person name="Grotbeck E.J."/>
            <person name="Davis N.W."/>
            <person name="Lim A."/>
            <person name="Dimalanta E.T."/>
            <person name="Potamousis K."/>
            <person name="Apodaca J."/>
            <person name="Anantharaman T.S."/>
            <person name="Lin J."/>
            <person name="Yen G."/>
            <person name="Schwartz D.C."/>
            <person name="Welch R.A."/>
            <person name="Blattner F.R."/>
        </authorList>
    </citation>
    <scope>NUCLEOTIDE SEQUENCE [LARGE SCALE GENOMIC DNA]</scope>
    <source>
        <strain>O157:H7 / EDL933 / ATCC 700927 / EHEC</strain>
    </source>
</reference>
<reference key="2">
    <citation type="journal article" date="2001" name="DNA Res.">
        <title>Complete genome sequence of enterohemorrhagic Escherichia coli O157:H7 and genomic comparison with a laboratory strain K-12.</title>
        <authorList>
            <person name="Hayashi T."/>
            <person name="Makino K."/>
            <person name="Ohnishi M."/>
            <person name="Kurokawa K."/>
            <person name="Ishii K."/>
            <person name="Yokoyama K."/>
            <person name="Han C.-G."/>
            <person name="Ohtsubo E."/>
            <person name="Nakayama K."/>
            <person name="Murata T."/>
            <person name="Tanaka M."/>
            <person name="Tobe T."/>
            <person name="Iida T."/>
            <person name="Takami H."/>
            <person name="Honda T."/>
            <person name="Sasakawa C."/>
            <person name="Ogasawara N."/>
            <person name="Yasunaga T."/>
            <person name="Kuhara S."/>
            <person name="Shiba T."/>
            <person name="Hattori M."/>
            <person name="Shinagawa H."/>
        </authorList>
    </citation>
    <scope>NUCLEOTIDE SEQUENCE [LARGE SCALE GENOMIC DNA]</scope>
    <source>
        <strain>O157:H7 / Sakai / RIMD 0509952 / EHEC</strain>
    </source>
</reference>
<accession>Q8XA34</accession>
<keyword id="KW-0436">Ligase</keyword>
<keyword id="KW-1185">Reference proteome</keyword>
<organism>
    <name type="scientific">Escherichia coli O157:H7</name>
    <dbReference type="NCBI Taxonomy" id="83334"/>
    <lineage>
        <taxon>Bacteria</taxon>
        <taxon>Pseudomonadati</taxon>
        <taxon>Pseudomonadota</taxon>
        <taxon>Gammaproteobacteria</taxon>
        <taxon>Enterobacterales</taxon>
        <taxon>Enterobacteriaceae</taxon>
        <taxon>Escherichia</taxon>
    </lineage>
</organism>
<feature type="chain" id="PRO_0000193067" description="Crotonobetaine/carnitine--CoA ligase">
    <location>
        <begin position="1"/>
        <end position="517"/>
    </location>
</feature>
<gene>
    <name evidence="1" type="primary">caiC</name>
    <name type="ordered locus">Z0043</name>
    <name type="ordered locus">ECs0040</name>
</gene>
<protein>
    <recommendedName>
        <fullName evidence="1">Crotonobetaine/carnitine--CoA ligase</fullName>
        <ecNumber evidence="1">6.2.1.48</ecNumber>
    </recommendedName>
</protein>
<evidence type="ECO:0000255" key="1">
    <source>
        <dbReference type="HAMAP-Rule" id="MF_01524"/>
    </source>
</evidence>
<evidence type="ECO:0000305" key="2"/>
<sequence>MDIIGGQHLRQMWDDLADVYGHKTALICESSGGVVNRYSYLELNQEINRTANLFYTLGIRKGDKVALHLDNCPEFIFCWFGLAKIGAIMVPINARLLREESAWILQNSQACLLVTSAQFYPMYQQIQQEDATQLRHICLTDVALPADDGVSSFTQLKNQQPATLCYAPPLSTDDTAEILFTSGTTSRPKGVVITHYNLRFAGYYSAWQCALRDDDVYLTVMPAFHIDCQCTAAMAAFSAGATFVLVEKYSARAFWGQVQKYRATITECIPMMIRTLMVQPPSANDRQHRLREVMFYLNLSEQEKDTFCERFGVRLLTSYGMTETIVGIIGDRPGDKRRWPSIGRAGFCYDAEIRDDHNRPLPAGEIGEICIKGVPGKTIFKEYFLNPKATAKVLEADGWLHTGDTGYRDEEGFFYFIDRRCNMIKRGGENVSCVELENIIATHPKIQDIVVVGIKDSIRDEAIKAFVVLNEGETLSEEEFFRFCEQNMAKFKVPSYLEIRKDLPRNCSGKIIRKNLK</sequence>
<proteinExistence type="inferred from homology"/>
<comment type="function">
    <text evidence="1">Catalyzes the transfer of CoA to carnitine, generating the initial carnitinyl-CoA needed for the CaiB reaction cycle. Also has activity toward crotonobetaine and gamma-butyrobetaine.</text>
</comment>
<comment type="catalytic activity">
    <reaction evidence="1">
        <text>4-(trimethylamino)butanoate + ATP + CoA = 4-(trimethylamino)butanoyl-CoA + AMP + diphosphate</text>
        <dbReference type="Rhea" id="RHEA:55960"/>
        <dbReference type="ChEBI" id="CHEBI:16244"/>
        <dbReference type="ChEBI" id="CHEBI:30616"/>
        <dbReference type="ChEBI" id="CHEBI:33019"/>
        <dbReference type="ChEBI" id="CHEBI:57287"/>
        <dbReference type="ChEBI" id="CHEBI:61513"/>
        <dbReference type="ChEBI" id="CHEBI:456215"/>
        <dbReference type="EC" id="6.2.1.48"/>
    </reaction>
</comment>
<comment type="catalytic activity">
    <reaction evidence="1">
        <text>crotonobetaine + ATP + CoA = crotonobetainyl-CoA + AMP + diphosphate</text>
        <dbReference type="Rhea" id="RHEA:30079"/>
        <dbReference type="ChEBI" id="CHEBI:17237"/>
        <dbReference type="ChEBI" id="CHEBI:30616"/>
        <dbReference type="ChEBI" id="CHEBI:33019"/>
        <dbReference type="ChEBI" id="CHEBI:57287"/>
        <dbReference type="ChEBI" id="CHEBI:60933"/>
        <dbReference type="ChEBI" id="CHEBI:456215"/>
        <dbReference type="EC" id="6.2.1.48"/>
    </reaction>
</comment>
<comment type="catalytic activity">
    <reaction evidence="1">
        <text>(R)-carnitine + ATP + CoA = (R)-carnitinyl-CoA + AMP + diphosphate</text>
        <dbReference type="Rhea" id="RHEA:28514"/>
        <dbReference type="ChEBI" id="CHEBI:16347"/>
        <dbReference type="ChEBI" id="CHEBI:30616"/>
        <dbReference type="ChEBI" id="CHEBI:33019"/>
        <dbReference type="ChEBI" id="CHEBI:57287"/>
        <dbReference type="ChEBI" id="CHEBI:60932"/>
        <dbReference type="ChEBI" id="CHEBI:456215"/>
        <dbReference type="EC" id="6.2.1.48"/>
    </reaction>
</comment>
<comment type="pathway">
    <text evidence="1">Amine and polyamine metabolism; carnitine metabolism.</text>
</comment>
<comment type="similarity">
    <text evidence="1">Belongs to the ATP-dependent AMP-binding enzyme family.</text>
</comment>
<comment type="sequence caution" evidence="2">
    <conflict type="erroneous initiation">
        <sequence resource="EMBL-CDS" id="AAG54340"/>
    </conflict>
    <text>Extended N-terminus.</text>
</comment>
<name>CAIC_ECO57</name>
<dbReference type="EC" id="6.2.1.48" evidence="1"/>
<dbReference type="EMBL" id="AE005174">
    <property type="protein sequence ID" value="AAG54340.1"/>
    <property type="status" value="ALT_INIT"/>
    <property type="molecule type" value="Genomic_DNA"/>
</dbReference>
<dbReference type="EMBL" id="BA000007">
    <property type="protein sequence ID" value="BAB33463.2"/>
    <property type="molecule type" value="Genomic_DNA"/>
</dbReference>
<dbReference type="PIR" id="H85484">
    <property type="entry name" value="H85484"/>
</dbReference>
<dbReference type="PIR" id="H90633">
    <property type="entry name" value="H90633"/>
</dbReference>
<dbReference type="RefSeq" id="NP_308067.2">
    <property type="nucleotide sequence ID" value="NC_002695.1"/>
</dbReference>
<dbReference type="RefSeq" id="WP_001301863.1">
    <property type="nucleotide sequence ID" value="NZ_VOAI01000002.1"/>
</dbReference>
<dbReference type="SMR" id="Q8XA34"/>
<dbReference type="STRING" id="155864.Z0043"/>
<dbReference type="GeneID" id="913437"/>
<dbReference type="KEGG" id="ece:Z0043"/>
<dbReference type="KEGG" id="ecs:ECs_0040"/>
<dbReference type="PATRIC" id="fig|386585.9.peg.137"/>
<dbReference type="eggNOG" id="COG0318">
    <property type="taxonomic scope" value="Bacteria"/>
</dbReference>
<dbReference type="HOGENOM" id="CLU_000022_59_0_6"/>
<dbReference type="OMA" id="YIMPKFD"/>
<dbReference type="UniPathway" id="UPA00117"/>
<dbReference type="Proteomes" id="UP000000558">
    <property type="component" value="Chromosome"/>
</dbReference>
<dbReference type="Proteomes" id="UP000002519">
    <property type="component" value="Chromosome"/>
</dbReference>
<dbReference type="GO" id="GO:0051108">
    <property type="term" value="F:carnitine-CoA ligase activity"/>
    <property type="evidence" value="ECO:0007669"/>
    <property type="project" value="InterPro"/>
</dbReference>
<dbReference type="GO" id="GO:0051109">
    <property type="term" value="F:crotonobetaine-CoA ligase activity"/>
    <property type="evidence" value="ECO:0007669"/>
    <property type="project" value="InterPro"/>
</dbReference>
<dbReference type="GO" id="GO:0031956">
    <property type="term" value="F:medium-chain fatty acid-CoA ligase activity"/>
    <property type="evidence" value="ECO:0007669"/>
    <property type="project" value="TreeGrafter"/>
</dbReference>
<dbReference type="GO" id="GO:0009437">
    <property type="term" value="P:carnitine metabolic process"/>
    <property type="evidence" value="ECO:0007669"/>
    <property type="project" value="UniProtKB-UniRule"/>
</dbReference>
<dbReference type="GO" id="GO:0006631">
    <property type="term" value="P:fatty acid metabolic process"/>
    <property type="evidence" value="ECO:0007669"/>
    <property type="project" value="TreeGrafter"/>
</dbReference>
<dbReference type="CDD" id="cd05934">
    <property type="entry name" value="FACL_DitJ_like"/>
    <property type="match status" value="1"/>
</dbReference>
<dbReference type="FunFam" id="3.30.300.30:FF:000011">
    <property type="entry name" value="Crotonobetaine/carnitine--CoA ligase"/>
    <property type="match status" value="1"/>
</dbReference>
<dbReference type="FunFam" id="3.40.50.12780:FF:000017">
    <property type="entry name" value="Crotonobetaine/carnitine--CoA ligase"/>
    <property type="match status" value="1"/>
</dbReference>
<dbReference type="Gene3D" id="3.30.300.30">
    <property type="match status" value="1"/>
</dbReference>
<dbReference type="Gene3D" id="3.40.50.12780">
    <property type="entry name" value="N-terminal domain of ligase-like"/>
    <property type="match status" value="1"/>
</dbReference>
<dbReference type="HAMAP" id="MF_01524">
    <property type="entry name" value="CaiC"/>
    <property type="match status" value="1"/>
</dbReference>
<dbReference type="InterPro" id="IPR025110">
    <property type="entry name" value="AMP-bd_C"/>
</dbReference>
<dbReference type="InterPro" id="IPR045851">
    <property type="entry name" value="AMP-bd_C_sf"/>
</dbReference>
<dbReference type="InterPro" id="IPR020845">
    <property type="entry name" value="AMP-binding_CS"/>
</dbReference>
<dbReference type="InterPro" id="IPR000873">
    <property type="entry name" value="AMP-dep_synth/lig_dom"/>
</dbReference>
<dbReference type="InterPro" id="IPR042099">
    <property type="entry name" value="ANL_N_sf"/>
</dbReference>
<dbReference type="InterPro" id="IPR023456">
    <property type="entry name" value="CaiC"/>
</dbReference>
<dbReference type="NCBIfam" id="NF005947">
    <property type="entry name" value="PRK08008.1"/>
    <property type="match status" value="1"/>
</dbReference>
<dbReference type="PANTHER" id="PTHR43201">
    <property type="entry name" value="ACYL-COA SYNTHETASE"/>
    <property type="match status" value="1"/>
</dbReference>
<dbReference type="PANTHER" id="PTHR43201:SF5">
    <property type="entry name" value="MEDIUM-CHAIN ACYL-COA LIGASE ACSF2, MITOCHONDRIAL"/>
    <property type="match status" value="1"/>
</dbReference>
<dbReference type="Pfam" id="PF00501">
    <property type="entry name" value="AMP-binding"/>
    <property type="match status" value="1"/>
</dbReference>
<dbReference type="Pfam" id="PF13193">
    <property type="entry name" value="AMP-binding_C"/>
    <property type="match status" value="1"/>
</dbReference>
<dbReference type="SUPFAM" id="SSF56801">
    <property type="entry name" value="Acetyl-CoA synthetase-like"/>
    <property type="match status" value="1"/>
</dbReference>
<dbReference type="PROSITE" id="PS00455">
    <property type="entry name" value="AMP_BINDING"/>
    <property type="match status" value="1"/>
</dbReference>